<protein>
    <recommendedName>
        <fullName evidence="1">Glycerol-3-phosphate dehydrogenase [NAD(P)+]</fullName>
        <ecNumber evidence="1">1.1.1.94</ecNumber>
    </recommendedName>
    <alternativeName>
        <fullName evidence="1">NAD(P)(+)-dependent glycerol-3-phosphate dehydrogenase</fullName>
    </alternativeName>
    <alternativeName>
        <fullName evidence="1">NAD(P)H-dependent dihydroxyacetone-phosphate reductase</fullName>
    </alternativeName>
</protein>
<gene>
    <name evidence="1" type="primary">gpsA</name>
    <name type="ordered locus">DP0651</name>
</gene>
<comment type="function">
    <text evidence="1">Catalyzes the reduction of the glycolytic intermediate dihydroxyacetone phosphate (DHAP) to sn-glycerol 3-phosphate (G3P), the key precursor for phospholipid synthesis.</text>
</comment>
<comment type="catalytic activity">
    <reaction evidence="1">
        <text>sn-glycerol 3-phosphate + NAD(+) = dihydroxyacetone phosphate + NADH + H(+)</text>
        <dbReference type="Rhea" id="RHEA:11092"/>
        <dbReference type="ChEBI" id="CHEBI:15378"/>
        <dbReference type="ChEBI" id="CHEBI:57540"/>
        <dbReference type="ChEBI" id="CHEBI:57597"/>
        <dbReference type="ChEBI" id="CHEBI:57642"/>
        <dbReference type="ChEBI" id="CHEBI:57945"/>
        <dbReference type="EC" id="1.1.1.94"/>
    </reaction>
    <physiologicalReaction direction="right-to-left" evidence="1">
        <dbReference type="Rhea" id="RHEA:11094"/>
    </physiologicalReaction>
</comment>
<comment type="catalytic activity">
    <reaction evidence="1">
        <text>sn-glycerol 3-phosphate + NADP(+) = dihydroxyacetone phosphate + NADPH + H(+)</text>
        <dbReference type="Rhea" id="RHEA:11096"/>
        <dbReference type="ChEBI" id="CHEBI:15378"/>
        <dbReference type="ChEBI" id="CHEBI:57597"/>
        <dbReference type="ChEBI" id="CHEBI:57642"/>
        <dbReference type="ChEBI" id="CHEBI:57783"/>
        <dbReference type="ChEBI" id="CHEBI:58349"/>
        <dbReference type="EC" id="1.1.1.94"/>
    </reaction>
    <physiologicalReaction direction="right-to-left" evidence="1">
        <dbReference type="Rhea" id="RHEA:11098"/>
    </physiologicalReaction>
</comment>
<comment type="pathway">
    <text evidence="1">Membrane lipid metabolism; glycerophospholipid metabolism.</text>
</comment>
<comment type="subcellular location">
    <subcellularLocation>
        <location evidence="1">Cytoplasm</location>
    </subcellularLocation>
</comment>
<comment type="similarity">
    <text evidence="1">Belongs to the NAD-dependent glycerol-3-phosphate dehydrogenase family.</text>
</comment>
<accession>Q6AQJ3</accession>
<reference key="1">
    <citation type="journal article" date="2004" name="Environ. Microbiol.">
        <title>The genome of Desulfotalea psychrophila, a sulfate-reducing bacterium from permanently cold Arctic sediments.</title>
        <authorList>
            <person name="Rabus R."/>
            <person name="Ruepp A."/>
            <person name="Frickey T."/>
            <person name="Rattei T."/>
            <person name="Fartmann B."/>
            <person name="Stark M."/>
            <person name="Bauer M."/>
            <person name="Zibat A."/>
            <person name="Lombardot T."/>
            <person name="Becker I."/>
            <person name="Amann J."/>
            <person name="Gellner K."/>
            <person name="Teeling H."/>
            <person name="Leuschner W.D."/>
            <person name="Gloeckner F.-O."/>
            <person name="Lupas A.N."/>
            <person name="Amann R."/>
            <person name="Klenk H.-P."/>
        </authorList>
    </citation>
    <scope>NUCLEOTIDE SEQUENCE [LARGE SCALE GENOMIC DNA]</scope>
    <source>
        <strain>DSM 12343 / LSv54</strain>
    </source>
</reference>
<evidence type="ECO:0000255" key="1">
    <source>
        <dbReference type="HAMAP-Rule" id="MF_00394"/>
    </source>
</evidence>
<name>GPDA_DESPS</name>
<proteinExistence type="inferred from homology"/>
<organism>
    <name type="scientific">Desulfotalea psychrophila (strain LSv54 / DSM 12343)</name>
    <dbReference type="NCBI Taxonomy" id="177439"/>
    <lineage>
        <taxon>Bacteria</taxon>
        <taxon>Pseudomonadati</taxon>
        <taxon>Thermodesulfobacteriota</taxon>
        <taxon>Desulfobulbia</taxon>
        <taxon>Desulfobulbales</taxon>
        <taxon>Desulfocapsaceae</taxon>
        <taxon>Desulfotalea</taxon>
    </lineage>
</organism>
<sequence>MSNLTPSIAVIGAGSWGTSLAILLAGKGYPVRLWGHNKEHIDRLISDGENSRYLPGISLPESLYPTPSLEKAVLGAQLVLMVVPSHVFRTVFRDLIPFLPIDCQIVSAVKGIENSTLSTMHMVMAQELAAYPALALIELGVISGPSFAKEVAQKQPTAVTVGFASADTAKKVQDIFSTDYFRVYTSTDIDGLEISGAFKNVMAIAAGISDGLSYGSNARAALITRGLAEMQRLGAAMNADPATFAGLSGLGDLLLTCTGDLSRNRNVGLQLGKGHSIEHIESEMFMVAEGVKTTKSFYDLARKLDVETPILDEVYHIIYEGKDCSQAVQDLLGRKLKPE</sequence>
<dbReference type="EC" id="1.1.1.94" evidence="1"/>
<dbReference type="EMBL" id="CR522870">
    <property type="protein sequence ID" value="CAG35380.1"/>
    <property type="molecule type" value="Genomic_DNA"/>
</dbReference>
<dbReference type="RefSeq" id="WP_011187896.1">
    <property type="nucleotide sequence ID" value="NC_006138.1"/>
</dbReference>
<dbReference type="SMR" id="Q6AQJ3"/>
<dbReference type="STRING" id="177439.DP0651"/>
<dbReference type="KEGG" id="dps:DP0651"/>
<dbReference type="eggNOG" id="COG0240">
    <property type="taxonomic scope" value="Bacteria"/>
</dbReference>
<dbReference type="HOGENOM" id="CLU_033449_0_2_7"/>
<dbReference type="OrthoDB" id="9812273at2"/>
<dbReference type="UniPathway" id="UPA00940"/>
<dbReference type="Proteomes" id="UP000000602">
    <property type="component" value="Chromosome"/>
</dbReference>
<dbReference type="GO" id="GO:0005829">
    <property type="term" value="C:cytosol"/>
    <property type="evidence" value="ECO:0007669"/>
    <property type="project" value="TreeGrafter"/>
</dbReference>
<dbReference type="GO" id="GO:0047952">
    <property type="term" value="F:glycerol-3-phosphate dehydrogenase [NAD(P)+] activity"/>
    <property type="evidence" value="ECO:0007669"/>
    <property type="project" value="UniProtKB-UniRule"/>
</dbReference>
<dbReference type="GO" id="GO:0051287">
    <property type="term" value="F:NAD binding"/>
    <property type="evidence" value="ECO:0007669"/>
    <property type="project" value="InterPro"/>
</dbReference>
<dbReference type="GO" id="GO:0005975">
    <property type="term" value="P:carbohydrate metabolic process"/>
    <property type="evidence" value="ECO:0007669"/>
    <property type="project" value="InterPro"/>
</dbReference>
<dbReference type="GO" id="GO:0046167">
    <property type="term" value="P:glycerol-3-phosphate biosynthetic process"/>
    <property type="evidence" value="ECO:0007669"/>
    <property type="project" value="UniProtKB-UniRule"/>
</dbReference>
<dbReference type="GO" id="GO:0046168">
    <property type="term" value="P:glycerol-3-phosphate catabolic process"/>
    <property type="evidence" value="ECO:0007669"/>
    <property type="project" value="InterPro"/>
</dbReference>
<dbReference type="GO" id="GO:0006650">
    <property type="term" value="P:glycerophospholipid metabolic process"/>
    <property type="evidence" value="ECO:0007669"/>
    <property type="project" value="UniProtKB-UniRule"/>
</dbReference>
<dbReference type="GO" id="GO:0008654">
    <property type="term" value="P:phospholipid biosynthetic process"/>
    <property type="evidence" value="ECO:0007669"/>
    <property type="project" value="UniProtKB-KW"/>
</dbReference>
<dbReference type="FunFam" id="1.10.1040.10:FF:000001">
    <property type="entry name" value="Glycerol-3-phosphate dehydrogenase [NAD(P)+]"/>
    <property type="match status" value="1"/>
</dbReference>
<dbReference type="FunFam" id="3.40.50.720:FF:000019">
    <property type="entry name" value="Glycerol-3-phosphate dehydrogenase [NAD(P)+]"/>
    <property type="match status" value="1"/>
</dbReference>
<dbReference type="Gene3D" id="1.10.1040.10">
    <property type="entry name" value="N-(1-d-carboxylethyl)-l-norvaline Dehydrogenase, domain 2"/>
    <property type="match status" value="1"/>
</dbReference>
<dbReference type="Gene3D" id="3.40.50.720">
    <property type="entry name" value="NAD(P)-binding Rossmann-like Domain"/>
    <property type="match status" value="1"/>
</dbReference>
<dbReference type="HAMAP" id="MF_00394">
    <property type="entry name" value="NAD_Glyc3P_dehydrog"/>
    <property type="match status" value="1"/>
</dbReference>
<dbReference type="InterPro" id="IPR008927">
    <property type="entry name" value="6-PGluconate_DH-like_C_sf"/>
</dbReference>
<dbReference type="InterPro" id="IPR013328">
    <property type="entry name" value="6PGD_dom2"/>
</dbReference>
<dbReference type="InterPro" id="IPR006168">
    <property type="entry name" value="G3P_DH_NAD-dep"/>
</dbReference>
<dbReference type="InterPro" id="IPR006109">
    <property type="entry name" value="G3P_DH_NAD-dep_C"/>
</dbReference>
<dbReference type="InterPro" id="IPR011128">
    <property type="entry name" value="G3P_DH_NAD-dep_N"/>
</dbReference>
<dbReference type="InterPro" id="IPR036291">
    <property type="entry name" value="NAD(P)-bd_dom_sf"/>
</dbReference>
<dbReference type="NCBIfam" id="NF000940">
    <property type="entry name" value="PRK00094.1-2"/>
    <property type="match status" value="1"/>
</dbReference>
<dbReference type="NCBIfam" id="NF000942">
    <property type="entry name" value="PRK00094.1-4"/>
    <property type="match status" value="1"/>
</dbReference>
<dbReference type="PANTHER" id="PTHR11728">
    <property type="entry name" value="GLYCEROL-3-PHOSPHATE DEHYDROGENASE"/>
    <property type="match status" value="1"/>
</dbReference>
<dbReference type="PANTHER" id="PTHR11728:SF1">
    <property type="entry name" value="GLYCEROL-3-PHOSPHATE DEHYDROGENASE [NAD(+)] 2, CHLOROPLASTIC"/>
    <property type="match status" value="1"/>
</dbReference>
<dbReference type="Pfam" id="PF07479">
    <property type="entry name" value="NAD_Gly3P_dh_C"/>
    <property type="match status" value="1"/>
</dbReference>
<dbReference type="Pfam" id="PF01210">
    <property type="entry name" value="NAD_Gly3P_dh_N"/>
    <property type="match status" value="1"/>
</dbReference>
<dbReference type="PIRSF" id="PIRSF000114">
    <property type="entry name" value="Glycerol-3-P_dh"/>
    <property type="match status" value="1"/>
</dbReference>
<dbReference type="PRINTS" id="PR00077">
    <property type="entry name" value="GPDHDRGNASE"/>
</dbReference>
<dbReference type="SUPFAM" id="SSF48179">
    <property type="entry name" value="6-phosphogluconate dehydrogenase C-terminal domain-like"/>
    <property type="match status" value="1"/>
</dbReference>
<dbReference type="SUPFAM" id="SSF51735">
    <property type="entry name" value="NAD(P)-binding Rossmann-fold domains"/>
    <property type="match status" value="1"/>
</dbReference>
<dbReference type="PROSITE" id="PS00957">
    <property type="entry name" value="NAD_G3PDH"/>
    <property type="match status" value="1"/>
</dbReference>
<feature type="chain" id="PRO_0000137955" description="Glycerol-3-phosphate dehydrogenase [NAD(P)+]">
    <location>
        <begin position="1"/>
        <end position="339"/>
    </location>
</feature>
<feature type="active site" description="Proton acceptor" evidence="1">
    <location>
        <position position="199"/>
    </location>
</feature>
<feature type="binding site" evidence="1">
    <location>
        <position position="15"/>
    </location>
    <ligand>
        <name>NADPH</name>
        <dbReference type="ChEBI" id="CHEBI:57783"/>
    </ligand>
</feature>
<feature type="binding site" evidence="1">
    <location>
        <position position="16"/>
    </location>
    <ligand>
        <name>NADPH</name>
        <dbReference type="ChEBI" id="CHEBI:57783"/>
    </ligand>
</feature>
<feature type="binding site" evidence="1">
    <location>
        <position position="36"/>
    </location>
    <ligand>
        <name>NADPH</name>
        <dbReference type="ChEBI" id="CHEBI:57783"/>
    </ligand>
</feature>
<feature type="binding site" evidence="1">
    <location>
        <position position="110"/>
    </location>
    <ligand>
        <name>NADPH</name>
        <dbReference type="ChEBI" id="CHEBI:57783"/>
    </ligand>
</feature>
<feature type="binding site" evidence="1">
    <location>
        <position position="110"/>
    </location>
    <ligand>
        <name>sn-glycerol 3-phosphate</name>
        <dbReference type="ChEBI" id="CHEBI:57597"/>
    </ligand>
</feature>
<feature type="binding site" evidence="1">
    <location>
        <position position="144"/>
    </location>
    <ligand>
        <name>sn-glycerol 3-phosphate</name>
        <dbReference type="ChEBI" id="CHEBI:57597"/>
    </ligand>
</feature>
<feature type="binding site" evidence="1">
    <location>
        <position position="146"/>
    </location>
    <ligand>
        <name>sn-glycerol 3-phosphate</name>
        <dbReference type="ChEBI" id="CHEBI:57597"/>
    </ligand>
</feature>
<feature type="binding site" evidence="1">
    <location>
        <position position="148"/>
    </location>
    <ligand>
        <name>NADPH</name>
        <dbReference type="ChEBI" id="CHEBI:57783"/>
    </ligand>
</feature>
<feature type="binding site" evidence="1">
    <location>
        <position position="199"/>
    </location>
    <ligand>
        <name>sn-glycerol 3-phosphate</name>
        <dbReference type="ChEBI" id="CHEBI:57597"/>
    </ligand>
</feature>
<feature type="binding site" evidence="1">
    <location>
        <position position="252"/>
    </location>
    <ligand>
        <name>sn-glycerol 3-phosphate</name>
        <dbReference type="ChEBI" id="CHEBI:57597"/>
    </ligand>
</feature>
<feature type="binding site" evidence="1">
    <location>
        <position position="262"/>
    </location>
    <ligand>
        <name>sn-glycerol 3-phosphate</name>
        <dbReference type="ChEBI" id="CHEBI:57597"/>
    </ligand>
</feature>
<feature type="binding site" evidence="1">
    <location>
        <position position="263"/>
    </location>
    <ligand>
        <name>NADPH</name>
        <dbReference type="ChEBI" id="CHEBI:57783"/>
    </ligand>
</feature>
<feature type="binding site" evidence="1">
    <location>
        <position position="263"/>
    </location>
    <ligand>
        <name>sn-glycerol 3-phosphate</name>
        <dbReference type="ChEBI" id="CHEBI:57597"/>
    </ligand>
</feature>
<feature type="binding site" evidence="1">
    <location>
        <position position="264"/>
    </location>
    <ligand>
        <name>sn-glycerol 3-phosphate</name>
        <dbReference type="ChEBI" id="CHEBI:57597"/>
    </ligand>
</feature>
<feature type="binding site" evidence="1">
    <location>
        <position position="287"/>
    </location>
    <ligand>
        <name>NADPH</name>
        <dbReference type="ChEBI" id="CHEBI:57783"/>
    </ligand>
</feature>
<feature type="binding site" evidence="1">
    <location>
        <position position="289"/>
    </location>
    <ligand>
        <name>NADPH</name>
        <dbReference type="ChEBI" id="CHEBI:57783"/>
    </ligand>
</feature>
<keyword id="KW-0963">Cytoplasm</keyword>
<keyword id="KW-0444">Lipid biosynthesis</keyword>
<keyword id="KW-0443">Lipid metabolism</keyword>
<keyword id="KW-0520">NAD</keyword>
<keyword id="KW-0521">NADP</keyword>
<keyword id="KW-0547">Nucleotide-binding</keyword>
<keyword id="KW-0560">Oxidoreductase</keyword>
<keyword id="KW-0594">Phospholipid biosynthesis</keyword>
<keyword id="KW-1208">Phospholipid metabolism</keyword>
<keyword id="KW-1185">Reference proteome</keyword>